<evidence type="ECO:0000250" key="1"/>
<evidence type="ECO:0000250" key="2">
    <source>
        <dbReference type="UniProtKB" id="P00924"/>
    </source>
</evidence>
<evidence type="ECO:0000250" key="3">
    <source>
        <dbReference type="UniProtKB" id="P06733"/>
    </source>
</evidence>
<evidence type="ECO:0000250" key="4">
    <source>
        <dbReference type="UniProtKB" id="P17182"/>
    </source>
</evidence>
<evidence type="ECO:0000269" key="5">
    <source>
    </source>
</evidence>
<evidence type="ECO:0000269" key="6">
    <source>
    </source>
</evidence>
<evidence type="ECO:0000269" key="7">
    <source>
    </source>
</evidence>
<evidence type="ECO:0000269" key="8">
    <source>
    </source>
</evidence>
<evidence type="ECO:0000305" key="9"/>
<evidence type="ECO:0000305" key="10">
    <source>
    </source>
</evidence>
<gene>
    <name type="primary">Eno1</name>
    <name type="synonym">Eno-1</name>
</gene>
<dbReference type="EC" id="4.2.1.11" evidence="8"/>
<dbReference type="EMBL" id="X02610">
    <property type="protein sequence ID" value="CAA26456.1"/>
    <property type="molecule type" value="mRNA"/>
</dbReference>
<dbReference type="EMBL" id="BC063174">
    <property type="protein sequence ID" value="AAH63174.1"/>
    <property type="status" value="ALT_INIT"/>
    <property type="molecule type" value="mRNA"/>
</dbReference>
<dbReference type="EMBL" id="BC078896">
    <property type="protein sequence ID" value="AAH78896.1"/>
    <property type="molecule type" value="mRNA"/>
</dbReference>
<dbReference type="EMBL" id="BC081847">
    <property type="protein sequence ID" value="AAH81847.2"/>
    <property type="molecule type" value="mRNA"/>
</dbReference>
<dbReference type="EMBL" id="AF241613">
    <property type="protein sequence ID" value="AAK01319.1"/>
    <property type="molecule type" value="mRNA"/>
</dbReference>
<dbReference type="PIR" id="A23126">
    <property type="entry name" value="A23126"/>
</dbReference>
<dbReference type="RefSeq" id="NP_001103378.1">
    <property type="nucleotide sequence ID" value="NM_001109908.2"/>
</dbReference>
<dbReference type="RefSeq" id="NP_001416168.1">
    <property type="nucleotide sequence ID" value="NM_001429239.1"/>
</dbReference>
<dbReference type="RefSeq" id="NP_001416169.1">
    <property type="nucleotide sequence ID" value="NM_001429240.1"/>
</dbReference>
<dbReference type="RefSeq" id="NP_001416170.1">
    <property type="nucleotide sequence ID" value="NM_001429241.1"/>
</dbReference>
<dbReference type="RefSeq" id="NP_001416171.1">
    <property type="nucleotide sequence ID" value="NM_001429242.1"/>
</dbReference>
<dbReference type="RefSeq" id="NP_001416172.1">
    <property type="nucleotide sequence ID" value="NM_001429243.1"/>
</dbReference>
<dbReference type="RefSeq" id="NP_001416173.1">
    <property type="nucleotide sequence ID" value="NM_001429244.1"/>
</dbReference>
<dbReference type="RefSeq" id="NP_001416174.1">
    <property type="nucleotide sequence ID" value="NM_001429245.1"/>
</dbReference>
<dbReference type="RefSeq" id="NP_036686.2">
    <property type="nucleotide sequence ID" value="NM_012554.4"/>
</dbReference>
<dbReference type="SMR" id="P04764"/>
<dbReference type="BioGRID" id="246510">
    <property type="interactions" value="4"/>
</dbReference>
<dbReference type="FunCoup" id="P04764">
    <property type="interactions" value="1927"/>
</dbReference>
<dbReference type="IntAct" id="P04764">
    <property type="interactions" value="10"/>
</dbReference>
<dbReference type="MINT" id="P04764"/>
<dbReference type="STRING" id="10116.ENSRNOP00000073191"/>
<dbReference type="MoonProt" id="P04764"/>
<dbReference type="GlyGen" id="P04764">
    <property type="glycosylation" value="1 site, 1 O-linked glycan (1 site)"/>
</dbReference>
<dbReference type="iPTMnet" id="P04764"/>
<dbReference type="PhosphoSitePlus" id="P04764"/>
<dbReference type="SwissPalm" id="P04764"/>
<dbReference type="jPOST" id="P04764"/>
<dbReference type="PaxDb" id="10116-ENSRNOP00000024106"/>
<dbReference type="Ensembl" id="ENSRNOT00000081579.2">
    <property type="protein sequence ID" value="ENSRNOP00000073191.1"/>
    <property type="gene ID" value="ENSRNOG00000017895.8"/>
</dbReference>
<dbReference type="GeneID" id="24333"/>
<dbReference type="KEGG" id="rno:24333"/>
<dbReference type="UCSC" id="RGD:2553">
    <property type="organism name" value="rat"/>
</dbReference>
<dbReference type="AGR" id="RGD:2553"/>
<dbReference type="CTD" id="2023"/>
<dbReference type="RGD" id="2553">
    <property type="gene designation" value="Eno1"/>
</dbReference>
<dbReference type="eggNOG" id="KOG2670">
    <property type="taxonomic scope" value="Eukaryota"/>
</dbReference>
<dbReference type="GeneTree" id="ENSGT00950000182805"/>
<dbReference type="InParanoid" id="P04764"/>
<dbReference type="OrthoDB" id="1739814at2759"/>
<dbReference type="PhylomeDB" id="P04764"/>
<dbReference type="TreeFam" id="TF300391"/>
<dbReference type="BRENDA" id="4.2.1.11">
    <property type="organism ID" value="5301"/>
</dbReference>
<dbReference type="SABIO-RK" id="P04764"/>
<dbReference type="UniPathway" id="UPA00109">
    <property type="reaction ID" value="UER00187"/>
</dbReference>
<dbReference type="PRO" id="PR:P04764"/>
<dbReference type="Proteomes" id="UP000002494">
    <property type="component" value="Chromosome 5"/>
</dbReference>
<dbReference type="Bgee" id="ENSRNOG00000017895">
    <property type="expression patterns" value="Expressed in adult mammalian kidney and 18 other cell types or tissues"/>
</dbReference>
<dbReference type="ExpressionAtlas" id="P04764">
    <property type="expression patterns" value="baseline and differential"/>
</dbReference>
<dbReference type="GO" id="GO:0005938">
    <property type="term" value="C:cell cortex"/>
    <property type="evidence" value="ECO:0000314"/>
    <property type="project" value="CAFA"/>
</dbReference>
<dbReference type="GO" id="GO:0009986">
    <property type="term" value="C:cell surface"/>
    <property type="evidence" value="ECO:0000314"/>
    <property type="project" value="CAFA"/>
</dbReference>
<dbReference type="GO" id="GO:0005737">
    <property type="term" value="C:cytoplasm"/>
    <property type="evidence" value="ECO:0000314"/>
    <property type="project" value="CAFA"/>
</dbReference>
<dbReference type="GO" id="GO:0005829">
    <property type="term" value="C:cytosol"/>
    <property type="evidence" value="ECO:0000314"/>
    <property type="project" value="CAFA"/>
</dbReference>
<dbReference type="GO" id="GO:0030426">
    <property type="term" value="C:growth cone"/>
    <property type="evidence" value="ECO:0000314"/>
    <property type="project" value="CAFA"/>
</dbReference>
<dbReference type="GO" id="GO:0016020">
    <property type="term" value="C:membrane"/>
    <property type="evidence" value="ECO:0000266"/>
    <property type="project" value="RGD"/>
</dbReference>
<dbReference type="GO" id="GO:0045121">
    <property type="term" value="C:membrane raft"/>
    <property type="evidence" value="ECO:0000314"/>
    <property type="project" value="CAFA"/>
</dbReference>
<dbReference type="GO" id="GO:0005640">
    <property type="term" value="C:nuclear outer membrane"/>
    <property type="evidence" value="ECO:0000266"/>
    <property type="project" value="RGD"/>
</dbReference>
<dbReference type="GO" id="GO:0000015">
    <property type="term" value="C:phosphopyruvate hydratase complex"/>
    <property type="evidence" value="ECO:0000314"/>
    <property type="project" value="CAFA"/>
</dbReference>
<dbReference type="GO" id="GO:0005886">
    <property type="term" value="C:plasma membrane"/>
    <property type="evidence" value="ECO:0000314"/>
    <property type="project" value="CAFA"/>
</dbReference>
<dbReference type="GO" id="GO:0097060">
    <property type="term" value="C:synaptic membrane"/>
    <property type="evidence" value="ECO:0000314"/>
    <property type="project" value="RGD"/>
</dbReference>
<dbReference type="GO" id="GO:0001227">
    <property type="term" value="F:DNA-binding transcription repressor activity, RNA polymerase II-specific"/>
    <property type="evidence" value="ECO:0000266"/>
    <property type="project" value="RGD"/>
</dbReference>
<dbReference type="GO" id="GO:0019899">
    <property type="term" value="F:enzyme binding"/>
    <property type="evidence" value="ECO:0000353"/>
    <property type="project" value="CAFA"/>
</dbReference>
<dbReference type="GO" id="GO:0051020">
    <property type="term" value="F:GTPase binding"/>
    <property type="evidence" value="ECO:0000266"/>
    <property type="project" value="RGD"/>
</dbReference>
<dbReference type="GO" id="GO:0031072">
    <property type="term" value="F:heat shock protein binding"/>
    <property type="evidence" value="ECO:0000353"/>
    <property type="project" value="RGD"/>
</dbReference>
<dbReference type="GO" id="GO:0042802">
    <property type="term" value="F:identical protein binding"/>
    <property type="evidence" value="ECO:0000353"/>
    <property type="project" value="RGD"/>
</dbReference>
<dbReference type="GO" id="GO:0000287">
    <property type="term" value="F:magnesium ion binding"/>
    <property type="evidence" value="ECO:0007669"/>
    <property type="project" value="InterPro"/>
</dbReference>
<dbReference type="GO" id="GO:0004634">
    <property type="term" value="F:phosphopyruvate hydratase activity"/>
    <property type="evidence" value="ECO:0000314"/>
    <property type="project" value="CAFA"/>
</dbReference>
<dbReference type="GO" id="GO:0042803">
    <property type="term" value="F:protein homodimerization activity"/>
    <property type="evidence" value="ECO:0000314"/>
    <property type="project" value="CAFA"/>
</dbReference>
<dbReference type="GO" id="GO:0044877">
    <property type="term" value="F:protein-containing complex binding"/>
    <property type="evidence" value="ECO:0000314"/>
    <property type="project" value="RGD"/>
</dbReference>
<dbReference type="GO" id="GO:0003723">
    <property type="term" value="F:RNA binding"/>
    <property type="evidence" value="ECO:0000266"/>
    <property type="project" value="RGD"/>
</dbReference>
<dbReference type="GO" id="GO:0000977">
    <property type="term" value="F:RNA polymerase II transcription regulatory region sequence-specific DNA binding"/>
    <property type="evidence" value="ECO:0000266"/>
    <property type="project" value="RGD"/>
</dbReference>
<dbReference type="GO" id="GO:0003714">
    <property type="term" value="F:transcription corepressor activity"/>
    <property type="evidence" value="ECO:0000266"/>
    <property type="project" value="RGD"/>
</dbReference>
<dbReference type="GO" id="GO:0001222">
    <property type="term" value="F:transcription corepressor binding"/>
    <property type="evidence" value="ECO:0000266"/>
    <property type="project" value="RGD"/>
</dbReference>
<dbReference type="GO" id="GO:0061621">
    <property type="term" value="P:canonical glycolysis"/>
    <property type="evidence" value="ECO:0000314"/>
    <property type="project" value="CAFA"/>
</dbReference>
<dbReference type="GO" id="GO:0071456">
    <property type="term" value="P:cellular response to hypoxia"/>
    <property type="evidence" value="ECO:0000314"/>
    <property type="project" value="CAFA"/>
</dbReference>
<dbReference type="GO" id="GO:0098761">
    <property type="term" value="P:cellular response to interleukin-7"/>
    <property type="evidence" value="ECO:0000266"/>
    <property type="project" value="RGD"/>
</dbReference>
<dbReference type="GO" id="GO:0070371">
    <property type="term" value="P:ERK1 and ERK2 cascade"/>
    <property type="evidence" value="ECO:0000314"/>
    <property type="project" value="CAFA"/>
</dbReference>
<dbReference type="GO" id="GO:0006094">
    <property type="term" value="P:gluconeogenesis"/>
    <property type="evidence" value="ECO:0000266"/>
    <property type="project" value="RGD"/>
</dbReference>
<dbReference type="GO" id="GO:0006096">
    <property type="term" value="P:glycolytic process"/>
    <property type="evidence" value="ECO:0000314"/>
    <property type="project" value="CAFA"/>
</dbReference>
<dbReference type="GO" id="GO:0001701">
    <property type="term" value="P:in utero embryonic development"/>
    <property type="evidence" value="ECO:0000266"/>
    <property type="project" value="RGD"/>
</dbReference>
<dbReference type="GO" id="GO:0030308">
    <property type="term" value="P:negative regulation of cell growth"/>
    <property type="evidence" value="ECO:0000266"/>
    <property type="project" value="RGD"/>
</dbReference>
<dbReference type="GO" id="GO:0045892">
    <property type="term" value="P:negative regulation of DNA-templated transcription"/>
    <property type="evidence" value="ECO:0000266"/>
    <property type="project" value="RGD"/>
</dbReference>
<dbReference type="GO" id="GO:1903298">
    <property type="term" value="P:negative regulation of hypoxia-induced intrinsic apoptotic signaling pathway"/>
    <property type="evidence" value="ECO:0000266"/>
    <property type="project" value="RGD"/>
</dbReference>
<dbReference type="GO" id="GO:0000122">
    <property type="term" value="P:negative regulation of transcription by RNA polymerase II"/>
    <property type="evidence" value="ECO:0000266"/>
    <property type="project" value="RGD"/>
</dbReference>
<dbReference type="GO" id="GO:2001171">
    <property type="term" value="P:positive regulation of ATP biosynthetic process"/>
    <property type="evidence" value="ECO:0000266"/>
    <property type="project" value="RGD"/>
</dbReference>
<dbReference type="GO" id="GO:0045933">
    <property type="term" value="P:positive regulation of muscle contraction"/>
    <property type="evidence" value="ECO:0000266"/>
    <property type="project" value="RGD"/>
</dbReference>
<dbReference type="GO" id="GO:0010756">
    <property type="term" value="P:positive regulation of plasminogen activation"/>
    <property type="evidence" value="ECO:0000266"/>
    <property type="project" value="RGD"/>
</dbReference>
<dbReference type="GO" id="GO:0009615">
    <property type="term" value="P:response to virus"/>
    <property type="evidence" value="ECO:0000266"/>
    <property type="project" value="RGD"/>
</dbReference>
<dbReference type="CDD" id="cd03313">
    <property type="entry name" value="enolase"/>
    <property type="match status" value="1"/>
</dbReference>
<dbReference type="FunFam" id="3.30.390.10:FF:000001">
    <property type="entry name" value="Enolase"/>
    <property type="match status" value="1"/>
</dbReference>
<dbReference type="FunFam" id="3.20.20.120:FF:000002">
    <property type="entry name" value="Enolase 1"/>
    <property type="match status" value="1"/>
</dbReference>
<dbReference type="Gene3D" id="3.20.20.120">
    <property type="entry name" value="Enolase-like C-terminal domain"/>
    <property type="match status" value="1"/>
</dbReference>
<dbReference type="Gene3D" id="3.30.390.10">
    <property type="entry name" value="Enolase-like, N-terminal domain"/>
    <property type="match status" value="1"/>
</dbReference>
<dbReference type="HAMAP" id="MF_00318">
    <property type="entry name" value="Enolase"/>
    <property type="match status" value="1"/>
</dbReference>
<dbReference type="InterPro" id="IPR000941">
    <property type="entry name" value="Enolase"/>
</dbReference>
<dbReference type="InterPro" id="IPR036849">
    <property type="entry name" value="Enolase-like_C_sf"/>
</dbReference>
<dbReference type="InterPro" id="IPR029017">
    <property type="entry name" value="Enolase-like_N"/>
</dbReference>
<dbReference type="InterPro" id="IPR020810">
    <property type="entry name" value="Enolase_C"/>
</dbReference>
<dbReference type="InterPro" id="IPR020809">
    <property type="entry name" value="Enolase_CS"/>
</dbReference>
<dbReference type="InterPro" id="IPR020811">
    <property type="entry name" value="Enolase_N"/>
</dbReference>
<dbReference type="NCBIfam" id="TIGR01060">
    <property type="entry name" value="eno"/>
    <property type="match status" value="1"/>
</dbReference>
<dbReference type="PANTHER" id="PTHR11902:SF55">
    <property type="entry name" value="ALPHA-ENOLASE"/>
    <property type="match status" value="1"/>
</dbReference>
<dbReference type="PANTHER" id="PTHR11902">
    <property type="entry name" value="ENOLASE"/>
    <property type="match status" value="1"/>
</dbReference>
<dbReference type="Pfam" id="PF00113">
    <property type="entry name" value="Enolase_C"/>
    <property type="match status" value="1"/>
</dbReference>
<dbReference type="Pfam" id="PF03952">
    <property type="entry name" value="Enolase_N"/>
    <property type="match status" value="1"/>
</dbReference>
<dbReference type="PIRSF" id="PIRSF001400">
    <property type="entry name" value="Enolase"/>
    <property type="match status" value="1"/>
</dbReference>
<dbReference type="PRINTS" id="PR00148">
    <property type="entry name" value="ENOLASE"/>
</dbReference>
<dbReference type="SFLD" id="SFLDS00001">
    <property type="entry name" value="Enolase"/>
    <property type="match status" value="1"/>
</dbReference>
<dbReference type="SFLD" id="SFLDF00002">
    <property type="entry name" value="enolase"/>
    <property type="match status" value="1"/>
</dbReference>
<dbReference type="SMART" id="SM01192">
    <property type="entry name" value="Enolase_C"/>
    <property type="match status" value="1"/>
</dbReference>
<dbReference type="SMART" id="SM01193">
    <property type="entry name" value="Enolase_N"/>
    <property type="match status" value="1"/>
</dbReference>
<dbReference type="SUPFAM" id="SSF51604">
    <property type="entry name" value="Enolase C-terminal domain-like"/>
    <property type="match status" value="1"/>
</dbReference>
<dbReference type="SUPFAM" id="SSF54826">
    <property type="entry name" value="Enolase N-terminal domain-like"/>
    <property type="match status" value="1"/>
</dbReference>
<dbReference type="PROSITE" id="PS00164">
    <property type="entry name" value="ENOLASE"/>
    <property type="match status" value="1"/>
</dbReference>
<comment type="function">
    <text evidence="3">Glycolytic enzyme that catalyzes the conversion of 2-phosphoglycerate to phosphoenolpyruvate. In addition to glycolysis, involved in various processes such as growth control, hypoxia tolerance and allergic responses. May also function in the intravascular and pericellular fibrinolytic system due to its ability to serve as a receptor and activator of plasminogen on the cell surface of several cell-types such as leukocytes and neurons. Stimulates immunoglobulin production.</text>
</comment>
<comment type="catalytic activity">
    <reaction evidence="8">
        <text>(2R)-2-phosphoglycerate = phosphoenolpyruvate + H2O</text>
        <dbReference type="Rhea" id="RHEA:10164"/>
        <dbReference type="ChEBI" id="CHEBI:15377"/>
        <dbReference type="ChEBI" id="CHEBI:58289"/>
        <dbReference type="ChEBI" id="CHEBI:58702"/>
        <dbReference type="EC" id="4.2.1.11"/>
    </reaction>
    <physiologicalReaction direction="left-to-right" evidence="10">
        <dbReference type="Rhea" id="RHEA:10165"/>
    </physiologicalReaction>
</comment>
<comment type="cofactor">
    <cofactor evidence="3">
        <name>Mg(2+)</name>
        <dbReference type="ChEBI" id="CHEBI:18420"/>
    </cofactor>
    <text evidence="3">Binds two Mg(2+) per subunit. Required for catalysis and for stabilizing the dimer.</text>
</comment>
<comment type="pathway">
    <text evidence="10">Carbohydrate degradation; glycolysis; pyruvate from D-glyceraldehyde 3-phosphate: step 4/5.</text>
</comment>
<comment type="subunit">
    <text evidence="3 4 7">Mammalian enolase is composed of 3 isozyme subunits, alpha, beta and gamma, which can form homodimers or heterodimers which are cell-type and development-specific (By similarity). ENO1 interacts with PLG in the neuronal plasma membrane and promotes its activation. The C-terminal lysine is required for this binding (PubMed:7964722). Interacts with ENO4 and PGAM2 (By similarity). Interacts with CMTM6 (By similarity).</text>
</comment>
<comment type="interaction">
    <interactant intactId="EBI-915852">
        <id>P04764</id>
    </interactant>
    <interactant intactId="EBI-10769071">
        <id>Q5VU43-11</id>
        <label>PDE4DIP</label>
    </interactant>
    <organismsDiffer>true</organismsDiffer>
    <experiments>2</experiments>
</comment>
<comment type="subcellular location">
    <subcellularLocation>
        <location>Cytoplasm</location>
    </subcellularLocation>
    <subcellularLocation>
        <location>Cell membrane</location>
    </subcellularLocation>
    <text>Can translocate to the plasma membrane in either the homodimeric (alpha/alpha) or heterodimeric (alpha/gamma) form.</text>
</comment>
<comment type="tissue specificity">
    <text evidence="5">Expressed in flagella of epididymal sperm. The alpha/alpha homodimer is expressed in embryo and in most adult tissues. The alpha/beta heterodimer and the beta/beta homodimer are found in striated muscle, and the alpha/gamma heterodimer and the gamma/gamma homodimer in neurons.</text>
</comment>
<comment type="developmental stage">
    <text evidence="6 8">During ontogenesis, there is a transition from the alpha/alpha homodimer to the alpha/beta heterodimer in striated muscle cells, and to the alpha/gamma heterodimer in nerve cells. In brain, levels of ENO1 decrease around 10 dpc and then gradually increase to adult age. In embryonic heart, ENO1 levels decrease rapidly during cardiac development.</text>
</comment>
<comment type="PTM">
    <text evidence="3">ISGylated.</text>
</comment>
<comment type="PTM">
    <text evidence="3">Lysine 2-hydroxyisobutyrylation (Khib) by p300/EP300 activates the phosphopyruvate hydratase activity.</text>
</comment>
<comment type="similarity">
    <text evidence="9">Belongs to the enolase family.</text>
</comment>
<comment type="sequence caution" evidence="9">
    <conflict type="erroneous initiation">
        <sequence resource="EMBL-CDS" id="AAH63174"/>
    </conflict>
</comment>
<keyword id="KW-0007">Acetylation</keyword>
<keyword id="KW-1003">Cell membrane</keyword>
<keyword id="KW-0963">Cytoplasm</keyword>
<keyword id="KW-0903">Direct protein sequencing</keyword>
<keyword id="KW-0324">Glycolysis</keyword>
<keyword id="KW-0379">Hydroxylation</keyword>
<keyword id="KW-1017">Isopeptide bond</keyword>
<keyword id="KW-0456">Lyase</keyword>
<keyword id="KW-0460">Magnesium</keyword>
<keyword id="KW-0472">Membrane</keyword>
<keyword id="KW-0479">Metal-binding</keyword>
<keyword id="KW-0597">Phosphoprotein</keyword>
<keyword id="KW-0617">Plasminogen activation</keyword>
<keyword id="KW-1185">Reference proteome</keyword>
<keyword id="KW-0832">Ubl conjugation</keyword>
<reference key="1">
    <citation type="journal article" date="1985" name="Nucleic Acids Res.">
        <title>Molecular cloning and the nucleotide sequence of cDNA to mRNA for non-neuronal enolase (alpha alpha enolase) of rat brain and liver.</title>
        <authorList>
            <person name="Sakimura K."/>
            <person name="Kushiya E."/>
            <person name="Obinata M."/>
            <person name="Takahashi Y."/>
        </authorList>
    </citation>
    <scope>NUCLEOTIDE SEQUENCE [MRNA]</scope>
    <scope>SUBCELLULAR LOCATION</scope>
    <scope>DEVELOPMENTAL STAGE</scope>
    <source>
        <tissue>Brain</tissue>
        <tissue>Liver</tissue>
    </source>
</reference>
<reference key="2">
    <citation type="submission" date="1986-01" db="EMBL/GenBank/DDBJ databases">
        <authorList>
            <person name="Takahashi Y."/>
        </authorList>
    </citation>
    <scope>SEQUENCE REVISION</scope>
</reference>
<reference key="3">
    <citation type="journal article" date="2004" name="Genome Res.">
        <title>The status, quality, and expansion of the NIH full-length cDNA project: the Mammalian Gene Collection (MGC).</title>
        <authorList>
            <consortium name="The MGC Project Team"/>
        </authorList>
    </citation>
    <scope>NUCLEOTIDE SEQUENCE [LARGE SCALE MRNA]</scope>
    <source>
        <tissue>Heart</tissue>
        <tissue>Pituitary</tissue>
        <tissue>Testis</tissue>
    </source>
</reference>
<reference key="4">
    <citation type="submission" date="2007-07" db="UniProtKB">
        <authorList>
            <person name="Lubec G."/>
            <person name="Afjehi-Sadat L."/>
            <person name="Chen W.-Q."/>
            <person name="Kang S.U."/>
        </authorList>
    </citation>
    <scope>PROTEIN SEQUENCE OF 10-28; 33-50; 72-103; 106-120; 163-179; 184-193; 203-228; 234-262; 270-281; 307-326; 336-394 AND 407-420</scope>
    <scope>IDENTIFICATION BY MASS SPECTROMETRY</scope>
    <source>
        <strain>Sprague-Dawley</strain>
        <tissue>Brain</tissue>
        <tissue>Hippocampus</tissue>
        <tissue>Spinal cord</tissue>
    </source>
</reference>
<reference key="5">
    <citation type="journal article" date="1994" name="J. Neurochem.">
        <title>Plasminogen binds specifically to alpha-enolase on rat neuronal plasma membrane.</title>
        <authorList>
            <person name="Nakajima K."/>
            <person name="Hamanoue M."/>
            <person name="Takemoto N."/>
            <person name="Hattori T."/>
            <person name="Kato K."/>
            <person name="Kohsaka S."/>
        </authorList>
    </citation>
    <scope>PROTEIN SEQUENCE OF 46-57; 97-109; 245-262 AND 369-382</scope>
    <scope>INTERACTION WITH PLG</scope>
    <source>
        <tissue>Embryonic brain</tissue>
    </source>
</reference>
<reference key="6">
    <citation type="submission" date="2000-02" db="EMBL/GenBank/DDBJ databases">
        <title>Rat cDNA encoding alpha enolase (2-phospho-D-glycerate hydro-lyase) (non-neural enolase) (NNE).</title>
        <authorList>
            <person name="Bole-Feysot C."/>
            <person name="Kelly P.A."/>
        </authorList>
    </citation>
    <scope>NUCLEOTIDE SEQUENCE [MRNA] OF 93-153</scope>
    <source>
        <tissue>Lymphoma</tissue>
    </source>
</reference>
<reference key="7">
    <citation type="journal article" date="1995" name="Am. J. Physiol.">
        <title>Differential expression of alpha- and beta-enolase genes during rat heart development and hypertrophy.</title>
        <authorList>
            <person name="Keller A."/>
            <person name="Rouzeau J.-D."/>
            <person name="Farhadian F."/>
            <person name="Wisnewsky C."/>
            <person name="Marotte F."/>
            <person name="Lamande N."/>
            <person name="Samuel J.L."/>
            <person name="Schwartz K."/>
            <person name="Lazar M."/>
            <person name="Lucas M."/>
        </authorList>
    </citation>
    <scope>DEVELOPMENTAL STAGE</scope>
    <scope>CATALYTIC ACTIVITY</scope>
</reference>
<reference key="8">
    <citation type="journal article" date="2000" name="Am. J. Physiol.">
        <title>Thyroid hormones differentially modulate enolase isozymes during rat skeletal and cardiac muscle development.</title>
        <authorList>
            <person name="Merkulova T."/>
            <person name="Keller A."/>
            <person name="Oliviero P."/>
            <person name="Marotte F."/>
            <person name="Samuel J.L."/>
            <person name="Rappaport L."/>
            <person name="Lamande N."/>
            <person name="Lucas M."/>
        </authorList>
    </citation>
    <scope>INDUCTION</scope>
</reference>
<reference key="9">
    <citation type="journal article" date="2004" name="Neurosci. Res.">
        <title>Localization of enolase in synaptic plasma membrane as an alphagamma heterodimer in rat brain.</title>
        <authorList>
            <person name="Ueta H."/>
            <person name="Nagasawa H."/>
            <person name="Oyabu-Manabe Y."/>
            <person name="Toida K."/>
            <person name="Ishimura K."/>
            <person name="Hori H."/>
        </authorList>
    </citation>
    <scope>SUBCELLULAR LOCATION OF ALPHA/GAMMA HETERODIMER</scope>
</reference>
<reference key="10">
    <citation type="journal article" date="2009" name="Reproduction">
        <title>Identification of novel immunodominant epididymal sperm proteins using combinatorial approach.</title>
        <authorList>
            <person name="Khan S.A."/>
            <person name="Suryawanshi A.R."/>
            <person name="Ranpura S.A."/>
            <person name="Jadhav S.V."/>
            <person name="Khole V.V."/>
        </authorList>
    </citation>
    <scope>IDENTIFICATION BY MASS SPECTROMETRY</scope>
    <scope>TISSUE SPECIFICITY</scope>
</reference>
<accession>P04764</accession>
<accession>Q66HI3</accession>
<accession>Q6AYV3</accession>
<accession>Q6P504</accession>
<feature type="initiator methionine" description="Removed" evidence="3">
    <location>
        <position position="1"/>
    </location>
</feature>
<feature type="chain" id="PRO_0000134099" description="Alpha-enolase">
    <location>
        <begin position="2"/>
        <end position="434"/>
    </location>
</feature>
<feature type="region of interest" description="Required for interaction with PLG" evidence="7">
    <location>
        <begin position="405"/>
        <end position="434"/>
    </location>
</feature>
<feature type="active site" description="Proton donor" evidence="2">
    <location>
        <position position="210"/>
    </location>
</feature>
<feature type="active site" description="Proton acceptor" evidence="2">
    <location>
        <position position="343"/>
    </location>
</feature>
<feature type="binding site" evidence="3">
    <location>
        <position position="40"/>
    </location>
    <ligand>
        <name>Mg(2+)</name>
        <dbReference type="ChEBI" id="CHEBI:18420"/>
        <label>1</label>
    </ligand>
</feature>
<feature type="binding site" evidence="2">
    <location>
        <position position="158"/>
    </location>
    <ligand>
        <name>substrate</name>
    </ligand>
</feature>
<feature type="binding site" evidence="2">
    <location>
        <position position="167"/>
    </location>
    <ligand>
        <name>substrate</name>
    </ligand>
</feature>
<feature type="binding site" evidence="3">
    <location>
        <position position="245"/>
    </location>
    <ligand>
        <name>Mg(2+)</name>
        <dbReference type="ChEBI" id="CHEBI:18420"/>
        <label>2</label>
    </ligand>
</feature>
<feature type="binding site" evidence="3">
    <location>
        <position position="293"/>
    </location>
    <ligand>
        <name>Mg(2+)</name>
        <dbReference type="ChEBI" id="CHEBI:18420"/>
        <label>2</label>
    </ligand>
</feature>
<feature type="binding site" evidence="2">
    <location>
        <position position="293"/>
    </location>
    <ligand>
        <name>substrate</name>
    </ligand>
</feature>
<feature type="binding site" evidence="3">
    <location>
        <position position="318"/>
    </location>
    <ligand>
        <name>Mg(2+)</name>
        <dbReference type="ChEBI" id="CHEBI:18420"/>
        <label>2</label>
    </ligand>
</feature>
<feature type="binding site" evidence="2">
    <location>
        <position position="318"/>
    </location>
    <ligand>
        <name>substrate</name>
    </ligand>
</feature>
<feature type="binding site" evidence="2">
    <location>
        <begin position="370"/>
        <end position="373"/>
    </location>
    <ligand>
        <name>substrate</name>
    </ligand>
</feature>
<feature type="binding site" evidence="2">
    <location>
        <position position="394"/>
    </location>
    <ligand>
        <name>substrate</name>
    </ligand>
</feature>
<feature type="modified residue" description="N-acetylserine" evidence="3">
    <location>
        <position position="2"/>
    </location>
</feature>
<feature type="modified residue" description="N6-acetyllysine" evidence="3">
    <location>
        <position position="5"/>
    </location>
</feature>
<feature type="modified residue" description="Phosphotyrosine" evidence="3">
    <location>
        <position position="44"/>
    </location>
</feature>
<feature type="modified residue" description="N6-acetyllysine; alternate" evidence="4">
    <location>
        <position position="60"/>
    </location>
</feature>
<feature type="modified residue" description="N6-succinyllysine; alternate" evidence="4">
    <location>
        <position position="60"/>
    </location>
</feature>
<feature type="modified residue" description="N6-acetyllysine" evidence="3">
    <location>
        <position position="64"/>
    </location>
</feature>
<feature type="modified residue" description="N6-acetyllysine" evidence="3">
    <location>
        <position position="71"/>
    </location>
</feature>
<feature type="modified residue" description="N6-acetyllysine; alternate" evidence="3">
    <location>
        <position position="89"/>
    </location>
</feature>
<feature type="modified residue" description="N6-succinyllysine; alternate" evidence="4">
    <location>
        <position position="89"/>
    </location>
</feature>
<feature type="modified residue" description="N6-acetyllysine" evidence="3">
    <location>
        <position position="126"/>
    </location>
</feature>
<feature type="modified residue" description="N6-acetyllysine" evidence="3">
    <location>
        <position position="193"/>
    </location>
</feature>
<feature type="modified residue" description="N6-acetyllysine" evidence="3">
    <location>
        <position position="199"/>
    </location>
</feature>
<feature type="modified residue" description="N6-acetyllysine; alternate" evidence="4">
    <location>
        <position position="202"/>
    </location>
</feature>
<feature type="modified residue" description="N6-(2-hydroxyisobutyryl)lysine; alternate" evidence="3">
    <location>
        <position position="228"/>
    </location>
</feature>
<feature type="modified residue" description="N6-acetyllysine; alternate" evidence="3">
    <location>
        <position position="228"/>
    </location>
</feature>
<feature type="modified residue" description="N6-succinyllysine; alternate" evidence="4">
    <location>
        <position position="228"/>
    </location>
</feature>
<feature type="modified residue" description="N6-acetyllysine; alternate" evidence="3">
    <location>
        <position position="233"/>
    </location>
</feature>
<feature type="modified residue" description="N6-malonyllysine; alternate" evidence="1">
    <location>
        <position position="233"/>
    </location>
</feature>
<feature type="modified residue" description="N6-acetyllysine" evidence="3">
    <location>
        <position position="256"/>
    </location>
</feature>
<feature type="modified residue" description="Phosphoserine" evidence="3">
    <location>
        <position position="263"/>
    </location>
</feature>
<feature type="modified residue" description="N6-(2-hydroxyisobutyryl)lysine; alternate" evidence="3">
    <location>
        <position position="281"/>
    </location>
</feature>
<feature type="modified residue" description="N6-acetyllysine; alternate" evidence="3">
    <location>
        <position position="281"/>
    </location>
</feature>
<feature type="modified residue" description="N6-acetyllysine" evidence="3">
    <location>
        <position position="285"/>
    </location>
</feature>
<feature type="modified residue" description="Phosphotyrosine" evidence="3">
    <location>
        <position position="287"/>
    </location>
</feature>
<feature type="modified residue" description="Phosphoserine" evidence="3">
    <location>
        <position position="291"/>
    </location>
</feature>
<feature type="modified residue" description="N6-acetyllysine" evidence="4">
    <location>
        <position position="335"/>
    </location>
</feature>
<feature type="modified residue" description="N6-acetyllysine" evidence="4">
    <location>
        <position position="343"/>
    </location>
</feature>
<feature type="modified residue" description="N6-acetyllysine" evidence="4">
    <location>
        <position position="406"/>
    </location>
</feature>
<feature type="modified residue" description="N6-acetyllysine; alternate" evidence="3">
    <location>
        <position position="420"/>
    </location>
</feature>
<feature type="modified residue" description="N6-malonyllysine; alternate" evidence="1">
    <location>
        <position position="420"/>
    </location>
</feature>
<feature type="modified residue" description="N6-succinyllysine; alternate" evidence="4">
    <location>
        <position position="420"/>
    </location>
</feature>
<feature type="cross-link" description="Glycyl lysine isopeptide (Lys-Gly) (interchain with G-Cter in SUMO2); alternate" evidence="3">
    <location>
        <position position="202"/>
    </location>
</feature>
<feature type="sequence conflict" description="In Ref. 5; AA sequence." evidence="9" ref="5">
    <original>E</original>
    <variation>Q</variation>
    <location>
        <position position="48"/>
    </location>
</feature>
<feature type="sequence conflict" description="In Ref. 6; AAK01319." evidence="9" ref="6">
    <original>LMIE</original>
    <variation>DQIK</variation>
    <location>
        <begin position="93"/>
        <end position="96"/>
    </location>
</feature>
<feature type="sequence conflict" description="In Ref. 1; CAA26456." evidence="9" ref="1">
    <original>E</original>
    <variation>G</variation>
    <location>
        <position position="125"/>
    </location>
</feature>
<feature type="sequence conflict" description="In Ref. 1; CAA26456." evidence="9" ref="1">
    <original>I</original>
    <variation>T</variation>
    <location>
        <position position="144"/>
    </location>
</feature>
<feature type="sequence conflict" description="In Ref. 6; AAK01319." evidence="9" ref="6">
    <original>N</original>
    <variation>D</variation>
    <location>
        <position position="151"/>
    </location>
</feature>
<feature type="sequence conflict" description="In Ref. 5; AA sequence." evidence="9" ref="5">
    <original>E</original>
    <variation>Q</variation>
    <location>
        <position position="250"/>
    </location>
</feature>
<feature type="sequence conflict" description="In Ref. 1; CAA26456." evidence="9" ref="1">
    <original>G</original>
    <variation>E</variation>
    <location>
        <position position="374"/>
    </location>
</feature>
<sequence>MSILKIHAREIFDSRGNPTVEVDLYTAKGLFRAAVPSGASTGIYEALELRDNDKTRFMGKGVSKAVEHINKTIAPALVSKKLNVVEQEKIDQLMIEMDGTENKSKFGANAILGVSLAVCKAGAVEKGVPLYRHIADLAGNPEVILPVPAFNVINGGSHAGNKLAMQEFMILPVGASSFREAMRIGAEVYHNLKNVIKEKYGKDATNVGDEGGFAPNILENKEALELLKSAIAKAGYTDQVVIGMDVAASEFYRAGKYDLDFKSPDDASRYITPDQLADLYKSFIKDYPVVSIEDPFDQDDWDAWQKFTATAGIQVVGDDLTVTNPKRIAKAAGEKSCNCLLLKVNQIGSVTESLQACKLAQSNGWGVMVSHRSGETEDTFIADLVVGLCTGQIKTGAPCRSERLAKYNQILRIEEELGSKAKFAGRSFRNPLAK</sequence>
<protein>
    <recommendedName>
        <fullName>Alpha-enolase</fullName>
        <ecNumber evidence="8">4.2.1.11</ecNumber>
    </recommendedName>
    <alternativeName>
        <fullName>2-phospho-D-glycerate hydro-lyase</fullName>
    </alternativeName>
    <alternativeName>
        <fullName>Enolase 1</fullName>
    </alternativeName>
    <alternativeName>
        <fullName>Non-neural enolase</fullName>
        <shortName>NNE</shortName>
    </alternativeName>
</protein>
<proteinExistence type="evidence at protein level"/>
<name>ENOA_RAT</name>
<organism>
    <name type="scientific">Rattus norvegicus</name>
    <name type="common">Rat</name>
    <dbReference type="NCBI Taxonomy" id="10116"/>
    <lineage>
        <taxon>Eukaryota</taxon>
        <taxon>Metazoa</taxon>
        <taxon>Chordata</taxon>
        <taxon>Craniata</taxon>
        <taxon>Vertebrata</taxon>
        <taxon>Euteleostomi</taxon>
        <taxon>Mammalia</taxon>
        <taxon>Eutheria</taxon>
        <taxon>Euarchontoglires</taxon>
        <taxon>Glires</taxon>
        <taxon>Rodentia</taxon>
        <taxon>Myomorpha</taxon>
        <taxon>Muroidea</taxon>
        <taxon>Muridae</taxon>
        <taxon>Murinae</taxon>
        <taxon>Rattus</taxon>
    </lineage>
</organism>